<name>RT18A_HUMAN</name>
<gene>
    <name type="primary">MRPS18A</name>
</gene>
<evidence type="ECO:0000250" key="1"/>
<evidence type="ECO:0000269" key="2">
    <source>
    </source>
</evidence>
<evidence type="ECO:0000269" key="3">
    <source>
    </source>
</evidence>
<evidence type="ECO:0000269" key="4">
    <source>
    </source>
</evidence>
<evidence type="ECO:0000269" key="5">
    <source>
    </source>
</evidence>
<evidence type="ECO:0000303" key="6">
    <source>
    </source>
</evidence>
<evidence type="ECO:0000303" key="7">
    <source>
    </source>
</evidence>
<evidence type="ECO:0000303" key="8">
    <source>
    </source>
</evidence>
<evidence type="ECO:0000303" key="9">
    <source ref="2"/>
</evidence>
<evidence type="ECO:0000305" key="10"/>
<evidence type="ECO:0000305" key="11">
    <source>
    </source>
</evidence>
<evidence type="ECO:0000312" key="12">
    <source>
        <dbReference type="EMBL" id="BAA91675.1"/>
    </source>
</evidence>
<evidence type="ECO:0000312" key="13">
    <source>
        <dbReference type="EMBL" id="BAB41005.1"/>
    </source>
</evidence>
<evidence type="ECO:0007744" key="14">
    <source>
        <dbReference type="PDB" id="3J7Y"/>
    </source>
</evidence>
<evidence type="ECO:0007744" key="15">
    <source>
        <dbReference type="PDB" id="3J9M"/>
    </source>
</evidence>
<evidence type="ECO:0007744" key="16">
    <source>
        <dbReference type="PDB" id="5OOL"/>
    </source>
</evidence>
<evidence type="ECO:0007744" key="17">
    <source>
        <dbReference type="PDB" id="5OOM"/>
    </source>
</evidence>
<evidence type="ECO:0007744" key="18">
    <source>
        <dbReference type="PDB" id="7QH6"/>
    </source>
</evidence>
<evidence type="ECO:0007744" key="19">
    <source>
        <dbReference type="PDB" id="7QH7"/>
    </source>
</evidence>
<evidence type="ECO:0007829" key="20">
    <source>
        <dbReference type="PDB" id="7OF0"/>
    </source>
</evidence>
<evidence type="ECO:0007829" key="21">
    <source>
        <dbReference type="PDB" id="7OIB"/>
    </source>
</evidence>
<evidence type="ECO:0007829" key="22">
    <source>
        <dbReference type="PDB" id="7QH6"/>
    </source>
</evidence>
<proteinExistence type="evidence at protein level"/>
<sequence>MAALKALVSGCGRLLRGLLAGPAATSWSRLPARGFREVVETQEGKTTIIEGRITATPKESPNPPNPSGQCPICRWNLKHKYNYDDVLLLSQFIRPHGGMLPRKITGLCQEEHRKIEECVKMAHRAGLLPNHRPRLPEGVVPKSKPQLNRYLTRWAPGSVKPIYKKGPRWNRVRMPVGSPLLRDNVCYSRTPWKLYH</sequence>
<comment type="subunit">
    <text evidence="2 3 4 5">Component of the mitochondrial large ribosomal subunit (mt-LSU) (PubMed:25278503, PubMed:25838379, PubMed:28892042, PubMed:35177605). Mature mammalian 55S mitochondrial ribosomes consist of a small (28S) and a large (39S) subunit. The 28S small subunit contains a 12S ribosomal RNA (12S mt-rRNA) and 30 different proteins. The 39S large subunit contains a 16S rRNA (16S mt-rRNA), a copy of mitochondrial valine transfer RNA (mt-tRNA(Val)), which plays an integral structural role, and 52 different proteins. mL66 forms a zinc-binding site with uL10m.</text>
</comment>
<comment type="subcellular location">
    <subcellularLocation>
        <location evidence="2 3 4">Mitochondrion</location>
    </subcellularLocation>
</comment>
<comment type="alternative products">
    <event type="alternative splicing"/>
    <isoform>
        <id>Q9NVS2-1</id>
        <name>1</name>
        <sequence type="displayed"/>
    </isoform>
    <isoform>
        <id>Q9NVS2-2</id>
        <name>2</name>
        <sequence type="described" ref="VSP_041245"/>
    </isoform>
    <isoform>
        <id>Q9NVS2-3</id>
        <name>3</name>
        <sequence type="described" ref="VSP_043496"/>
    </isoform>
</comment>
<comment type="miscellaneous">
    <text evidence="11">There are 3 mitochondrial isoforms of bS18 in mammalia, localizing to 3 distinct sites in the mitoribosome. bS18m (bs18c) binds to the same site as bacterial bS18, mS40 (bS18b) binds to a novel location of the 28S small subunit, and mL66 (bS18a, this protein) binds to the 39S large subunit.</text>
</comment>
<comment type="similarity">
    <text evidence="10">Belongs to the bacterial ribosomal protein bS18 family. Mitochondrion-specific ribosomal protein mL66 subfamily.</text>
</comment>
<organism evidence="12">
    <name type="scientific">Homo sapiens</name>
    <name type="common">Human</name>
    <dbReference type="NCBI Taxonomy" id="9606"/>
    <lineage>
        <taxon>Eukaryota</taxon>
        <taxon>Metazoa</taxon>
        <taxon>Chordata</taxon>
        <taxon>Craniata</taxon>
        <taxon>Vertebrata</taxon>
        <taxon>Euteleostomi</taxon>
        <taxon>Mammalia</taxon>
        <taxon>Eutheria</taxon>
        <taxon>Euarchontoglires</taxon>
        <taxon>Primates</taxon>
        <taxon>Haplorrhini</taxon>
        <taxon>Catarrhini</taxon>
        <taxon>Hominidae</taxon>
        <taxon>Homo</taxon>
    </lineage>
</organism>
<dbReference type="EMBL" id="AB049952">
    <property type="protein sequence ID" value="BAB41005.1"/>
    <property type="molecule type" value="mRNA"/>
</dbReference>
<dbReference type="EMBL" id="DQ884400">
    <property type="protein sequence ID" value="ABI63367.1"/>
    <property type="molecule type" value="mRNA"/>
</dbReference>
<dbReference type="EMBL" id="AK001410">
    <property type="protein sequence ID" value="BAA91675.1"/>
    <property type="molecule type" value="mRNA"/>
</dbReference>
<dbReference type="EMBL" id="AK300757">
    <property type="protein sequence ID" value="BAG62423.1"/>
    <property type="molecule type" value="mRNA"/>
</dbReference>
<dbReference type="EMBL" id="AL136131">
    <property type="status" value="NOT_ANNOTATED_CDS"/>
    <property type="molecule type" value="Genomic_DNA"/>
</dbReference>
<dbReference type="EMBL" id="CH471081">
    <property type="protein sequence ID" value="EAX04225.1"/>
    <property type="molecule type" value="Genomic_DNA"/>
</dbReference>
<dbReference type="EMBL" id="BC010364">
    <property type="protein sequence ID" value="AAH10364.1"/>
    <property type="molecule type" value="mRNA"/>
</dbReference>
<dbReference type="CCDS" id="CCDS4906.1">
    <molecule id="Q9NVS2-1"/>
</dbReference>
<dbReference type="CCDS" id="CCDS55006.1">
    <molecule id="Q9NVS2-3"/>
</dbReference>
<dbReference type="RefSeq" id="NP_001180272.1">
    <molecule id="Q9NVS2-3"/>
    <property type="nucleotide sequence ID" value="NM_001193343.2"/>
</dbReference>
<dbReference type="RefSeq" id="NP_060605.1">
    <molecule id="Q9NVS2-1"/>
    <property type="nucleotide sequence ID" value="NM_018135.4"/>
</dbReference>
<dbReference type="RefSeq" id="XP_006715197.1">
    <molecule id="Q9NVS2-2"/>
    <property type="nucleotide sequence ID" value="XM_006715134.4"/>
</dbReference>
<dbReference type="RefSeq" id="XP_054211748.1">
    <molecule id="Q9NVS2-2"/>
    <property type="nucleotide sequence ID" value="XM_054355773.1"/>
</dbReference>
<dbReference type="PDB" id="3J7Y">
    <property type="method" value="EM"/>
    <property type="resolution" value="3.40 A"/>
    <property type="chains" value="r=1-196"/>
</dbReference>
<dbReference type="PDB" id="3J9M">
    <property type="method" value="EM"/>
    <property type="resolution" value="3.50 A"/>
    <property type="chains" value="r=1-196"/>
</dbReference>
<dbReference type="PDB" id="5OOL">
    <property type="method" value="EM"/>
    <property type="resolution" value="3.06 A"/>
    <property type="chains" value="r=1-196"/>
</dbReference>
<dbReference type="PDB" id="5OOM">
    <property type="method" value="EM"/>
    <property type="resolution" value="3.03 A"/>
    <property type="chains" value="r=1-196"/>
</dbReference>
<dbReference type="PDB" id="6I9R">
    <property type="method" value="EM"/>
    <property type="resolution" value="3.90 A"/>
    <property type="chains" value="r=1-196"/>
</dbReference>
<dbReference type="PDB" id="6NU2">
    <property type="method" value="EM"/>
    <property type="resolution" value="3.90 A"/>
    <property type="chains" value="r=35-196"/>
</dbReference>
<dbReference type="PDB" id="6NU3">
    <property type="method" value="EM"/>
    <property type="resolution" value="4.40 A"/>
    <property type="chains" value="r=1-196"/>
</dbReference>
<dbReference type="PDB" id="6VLZ">
    <property type="method" value="EM"/>
    <property type="resolution" value="2.97 A"/>
    <property type="chains" value="r=1-196"/>
</dbReference>
<dbReference type="PDB" id="6VMI">
    <property type="method" value="EM"/>
    <property type="resolution" value="2.96 A"/>
    <property type="chains" value="r=1-196"/>
</dbReference>
<dbReference type="PDB" id="6ZM5">
    <property type="method" value="EM"/>
    <property type="resolution" value="2.89 A"/>
    <property type="chains" value="r=1-196"/>
</dbReference>
<dbReference type="PDB" id="6ZM6">
    <property type="method" value="EM"/>
    <property type="resolution" value="2.59 A"/>
    <property type="chains" value="r=1-196"/>
</dbReference>
<dbReference type="PDB" id="6ZS9">
    <property type="method" value="EM"/>
    <property type="resolution" value="4.00 A"/>
    <property type="chains" value="r=1-196"/>
</dbReference>
<dbReference type="PDB" id="6ZSA">
    <property type="method" value="EM"/>
    <property type="resolution" value="4.00 A"/>
    <property type="chains" value="r=1-196"/>
</dbReference>
<dbReference type="PDB" id="6ZSB">
    <property type="method" value="EM"/>
    <property type="resolution" value="4.50 A"/>
    <property type="chains" value="r=1-196"/>
</dbReference>
<dbReference type="PDB" id="6ZSC">
    <property type="method" value="EM"/>
    <property type="resolution" value="3.50 A"/>
    <property type="chains" value="r=1-196"/>
</dbReference>
<dbReference type="PDB" id="6ZSD">
    <property type="method" value="EM"/>
    <property type="resolution" value="3.70 A"/>
    <property type="chains" value="r=1-196"/>
</dbReference>
<dbReference type="PDB" id="6ZSE">
    <property type="method" value="EM"/>
    <property type="resolution" value="5.00 A"/>
    <property type="chains" value="r=1-196"/>
</dbReference>
<dbReference type="PDB" id="6ZSG">
    <property type="method" value="EM"/>
    <property type="resolution" value="4.00 A"/>
    <property type="chains" value="r=1-196"/>
</dbReference>
<dbReference type="PDB" id="7A5F">
    <property type="method" value="EM"/>
    <property type="resolution" value="4.40 A"/>
    <property type="chains" value="r3=1-196"/>
</dbReference>
<dbReference type="PDB" id="7A5G">
    <property type="method" value="EM"/>
    <property type="resolution" value="4.33 A"/>
    <property type="chains" value="r3=1-196"/>
</dbReference>
<dbReference type="PDB" id="7A5H">
    <property type="method" value="EM"/>
    <property type="resolution" value="3.30 A"/>
    <property type="chains" value="r=1-196"/>
</dbReference>
<dbReference type="PDB" id="7A5I">
    <property type="method" value="EM"/>
    <property type="resolution" value="3.70 A"/>
    <property type="chains" value="r3=1-196"/>
</dbReference>
<dbReference type="PDB" id="7A5J">
    <property type="method" value="EM"/>
    <property type="resolution" value="3.10 A"/>
    <property type="chains" value="r=1-196"/>
</dbReference>
<dbReference type="PDB" id="7A5K">
    <property type="method" value="EM"/>
    <property type="resolution" value="3.70 A"/>
    <property type="chains" value="r3=1-196"/>
</dbReference>
<dbReference type="PDB" id="7L08">
    <property type="method" value="EM"/>
    <property type="resolution" value="3.49 A"/>
    <property type="chains" value="r=1-196"/>
</dbReference>
<dbReference type="PDB" id="7L20">
    <property type="method" value="EM"/>
    <property type="resolution" value="3.15 A"/>
    <property type="chains" value="r=1-196"/>
</dbReference>
<dbReference type="PDB" id="7O9K">
    <property type="method" value="EM"/>
    <property type="resolution" value="3.10 A"/>
    <property type="chains" value="r=1-196"/>
</dbReference>
<dbReference type="PDB" id="7O9M">
    <property type="method" value="EM"/>
    <property type="resolution" value="2.50 A"/>
    <property type="chains" value="r=1-196"/>
</dbReference>
<dbReference type="PDB" id="7ODR">
    <property type="method" value="EM"/>
    <property type="resolution" value="2.90 A"/>
    <property type="chains" value="r=1-196"/>
</dbReference>
<dbReference type="PDB" id="7ODS">
    <property type="method" value="EM"/>
    <property type="resolution" value="3.10 A"/>
    <property type="chains" value="r=1-196"/>
</dbReference>
<dbReference type="PDB" id="7ODT">
    <property type="method" value="EM"/>
    <property type="resolution" value="3.10 A"/>
    <property type="chains" value="r=1-196"/>
</dbReference>
<dbReference type="PDB" id="7OF0">
    <property type="method" value="EM"/>
    <property type="resolution" value="2.20 A"/>
    <property type="chains" value="r=1-196"/>
</dbReference>
<dbReference type="PDB" id="7OF2">
    <property type="method" value="EM"/>
    <property type="resolution" value="2.70 A"/>
    <property type="chains" value="r=1-196"/>
</dbReference>
<dbReference type="PDB" id="7OF3">
    <property type="method" value="EM"/>
    <property type="resolution" value="2.70 A"/>
    <property type="chains" value="r=1-196"/>
</dbReference>
<dbReference type="PDB" id="7OF4">
    <property type="method" value="EM"/>
    <property type="resolution" value="2.70 A"/>
    <property type="chains" value="r=1-196"/>
</dbReference>
<dbReference type="PDB" id="7OF5">
    <property type="method" value="EM"/>
    <property type="resolution" value="2.90 A"/>
    <property type="chains" value="r=1-196"/>
</dbReference>
<dbReference type="PDB" id="7OF6">
    <property type="method" value="EM"/>
    <property type="resolution" value="2.60 A"/>
    <property type="chains" value="r=1-196"/>
</dbReference>
<dbReference type="PDB" id="7OF7">
    <property type="method" value="EM"/>
    <property type="resolution" value="2.50 A"/>
    <property type="chains" value="r=1-196"/>
</dbReference>
<dbReference type="PDB" id="7OG4">
    <property type="method" value="EM"/>
    <property type="resolution" value="3.80 A"/>
    <property type="chains" value="r=1-196"/>
</dbReference>
<dbReference type="PDB" id="7OI6">
    <property type="method" value="EM"/>
    <property type="resolution" value="5.70 A"/>
    <property type="chains" value="r=1-196"/>
</dbReference>
<dbReference type="PDB" id="7OI7">
    <property type="method" value="EM"/>
    <property type="resolution" value="3.50 A"/>
    <property type="chains" value="r=1-196"/>
</dbReference>
<dbReference type="PDB" id="7OI8">
    <property type="method" value="EM"/>
    <property type="resolution" value="3.50 A"/>
    <property type="chains" value="r=1-196"/>
</dbReference>
<dbReference type="PDB" id="7OI9">
    <property type="method" value="EM"/>
    <property type="resolution" value="3.30 A"/>
    <property type="chains" value="r=1-196"/>
</dbReference>
<dbReference type="PDB" id="7OIA">
    <property type="method" value="EM"/>
    <property type="resolution" value="3.20 A"/>
    <property type="chains" value="r=1-196"/>
</dbReference>
<dbReference type="PDB" id="7OIB">
    <property type="method" value="EM"/>
    <property type="resolution" value="3.30 A"/>
    <property type="chains" value="r=1-196"/>
</dbReference>
<dbReference type="PDB" id="7OIC">
    <property type="method" value="EM"/>
    <property type="resolution" value="3.10 A"/>
    <property type="chains" value="r=1-196"/>
</dbReference>
<dbReference type="PDB" id="7OID">
    <property type="method" value="EM"/>
    <property type="resolution" value="3.70 A"/>
    <property type="chains" value="r=1-196"/>
</dbReference>
<dbReference type="PDB" id="7OIE">
    <property type="method" value="EM"/>
    <property type="resolution" value="3.50 A"/>
    <property type="chains" value="r=1-196"/>
</dbReference>
<dbReference type="PDB" id="7PD3">
    <property type="method" value="EM"/>
    <property type="resolution" value="3.40 A"/>
    <property type="chains" value="r=1-196"/>
</dbReference>
<dbReference type="PDB" id="7PO4">
    <property type="method" value="EM"/>
    <property type="resolution" value="2.56 A"/>
    <property type="chains" value="r=1-196"/>
</dbReference>
<dbReference type="PDB" id="7QH6">
    <property type="method" value="EM"/>
    <property type="resolution" value="3.08 A"/>
    <property type="chains" value="r=1-196"/>
</dbReference>
<dbReference type="PDB" id="7QH7">
    <property type="method" value="EM"/>
    <property type="resolution" value="2.89 A"/>
    <property type="chains" value="r=57-196"/>
</dbReference>
<dbReference type="PDB" id="7QI4">
    <property type="method" value="EM"/>
    <property type="resolution" value="2.21 A"/>
    <property type="chains" value="r=1-196"/>
</dbReference>
<dbReference type="PDB" id="7QI5">
    <property type="method" value="EM"/>
    <property type="resolution" value="2.63 A"/>
    <property type="chains" value="r=1-196"/>
</dbReference>
<dbReference type="PDB" id="7QI6">
    <property type="method" value="EM"/>
    <property type="resolution" value="2.98 A"/>
    <property type="chains" value="r=1-196"/>
</dbReference>
<dbReference type="PDB" id="8ANY">
    <property type="method" value="EM"/>
    <property type="resolution" value="2.85 A"/>
    <property type="chains" value="r=1-196"/>
</dbReference>
<dbReference type="PDB" id="8K2A">
    <property type="method" value="EM"/>
    <property type="resolution" value="2.90 A"/>
    <property type="chains" value="SR=1-196"/>
</dbReference>
<dbReference type="PDB" id="8K2B">
    <property type="method" value="EM"/>
    <property type="resolution" value="3.40 A"/>
    <property type="chains" value="SR=1-196"/>
</dbReference>
<dbReference type="PDB" id="8OIR">
    <property type="method" value="EM"/>
    <property type="resolution" value="3.10 A"/>
    <property type="chains" value="Bh=1-196"/>
</dbReference>
<dbReference type="PDB" id="8OIT">
    <property type="method" value="EM"/>
    <property type="resolution" value="2.90 A"/>
    <property type="chains" value="Bh=1-196"/>
</dbReference>
<dbReference type="PDB" id="8PK0">
    <property type="method" value="EM"/>
    <property type="resolution" value="3.03 A"/>
    <property type="chains" value="r=1-196"/>
</dbReference>
<dbReference type="PDB" id="8QSJ">
    <property type="method" value="EM"/>
    <property type="resolution" value="3.00 A"/>
    <property type="chains" value="r=1-196"/>
</dbReference>
<dbReference type="PDB" id="8QU5">
    <property type="method" value="EM"/>
    <property type="resolution" value="2.42 A"/>
    <property type="chains" value="r=1-196"/>
</dbReference>
<dbReference type="PDB" id="8RRI">
    <property type="method" value="EM"/>
    <property type="resolution" value="2.40 A"/>
    <property type="chains" value="r=1-196"/>
</dbReference>
<dbReference type="PDB" id="8XT0">
    <property type="method" value="EM"/>
    <property type="resolution" value="3.20 A"/>
    <property type="chains" value="SR=1-196"/>
</dbReference>
<dbReference type="PDB" id="8XT1">
    <property type="method" value="EM"/>
    <property type="resolution" value="3.10 A"/>
    <property type="chains" value="SR=1-196"/>
</dbReference>
<dbReference type="PDB" id="8XT2">
    <property type="method" value="EM"/>
    <property type="resolution" value="3.30 A"/>
    <property type="chains" value="SR=1-196"/>
</dbReference>
<dbReference type="PDB" id="8XT3">
    <property type="method" value="EM"/>
    <property type="resolution" value="3.10 A"/>
    <property type="chains" value="SR=1-196"/>
</dbReference>
<dbReference type="PDBsum" id="3J7Y"/>
<dbReference type="PDBsum" id="3J9M"/>
<dbReference type="PDBsum" id="5OOL"/>
<dbReference type="PDBsum" id="5OOM"/>
<dbReference type="PDBsum" id="6I9R"/>
<dbReference type="PDBsum" id="6NU2"/>
<dbReference type="PDBsum" id="6NU3"/>
<dbReference type="PDBsum" id="6VLZ"/>
<dbReference type="PDBsum" id="6VMI"/>
<dbReference type="PDBsum" id="6ZM5"/>
<dbReference type="PDBsum" id="6ZM6"/>
<dbReference type="PDBsum" id="6ZS9"/>
<dbReference type="PDBsum" id="6ZSA"/>
<dbReference type="PDBsum" id="6ZSB"/>
<dbReference type="PDBsum" id="6ZSC"/>
<dbReference type="PDBsum" id="6ZSD"/>
<dbReference type="PDBsum" id="6ZSE"/>
<dbReference type="PDBsum" id="6ZSG"/>
<dbReference type="PDBsum" id="7A5F"/>
<dbReference type="PDBsum" id="7A5G"/>
<dbReference type="PDBsum" id="7A5H"/>
<dbReference type="PDBsum" id="7A5I"/>
<dbReference type="PDBsum" id="7A5J"/>
<dbReference type="PDBsum" id="7A5K"/>
<dbReference type="PDBsum" id="7L08"/>
<dbReference type="PDBsum" id="7L20"/>
<dbReference type="PDBsum" id="7O9K"/>
<dbReference type="PDBsum" id="7O9M"/>
<dbReference type="PDBsum" id="7ODR"/>
<dbReference type="PDBsum" id="7ODS"/>
<dbReference type="PDBsum" id="7ODT"/>
<dbReference type="PDBsum" id="7OF0"/>
<dbReference type="PDBsum" id="7OF2"/>
<dbReference type="PDBsum" id="7OF3"/>
<dbReference type="PDBsum" id="7OF4"/>
<dbReference type="PDBsum" id="7OF5"/>
<dbReference type="PDBsum" id="7OF6"/>
<dbReference type="PDBsum" id="7OF7"/>
<dbReference type="PDBsum" id="7OG4"/>
<dbReference type="PDBsum" id="7OI6"/>
<dbReference type="PDBsum" id="7OI7"/>
<dbReference type="PDBsum" id="7OI8"/>
<dbReference type="PDBsum" id="7OI9"/>
<dbReference type="PDBsum" id="7OIA"/>
<dbReference type="PDBsum" id="7OIB"/>
<dbReference type="PDBsum" id="7OIC"/>
<dbReference type="PDBsum" id="7OID"/>
<dbReference type="PDBsum" id="7OIE"/>
<dbReference type="PDBsum" id="7PD3"/>
<dbReference type="PDBsum" id="7PO4"/>
<dbReference type="PDBsum" id="7QH6"/>
<dbReference type="PDBsum" id="7QH7"/>
<dbReference type="PDBsum" id="7QI4"/>
<dbReference type="PDBsum" id="7QI5"/>
<dbReference type="PDBsum" id="7QI6"/>
<dbReference type="PDBsum" id="8ANY"/>
<dbReference type="PDBsum" id="8K2A"/>
<dbReference type="PDBsum" id="8K2B"/>
<dbReference type="PDBsum" id="8OIR"/>
<dbReference type="PDBsum" id="8OIT"/>
<dbReference type="PDBsum" id="8PK0"/>
<dbReference type="PDBsum" id="8QSJ"/>
<dbReference type="PDBsum" id="8QU5"/>
<dbReference type="PDBsum" id="8RRI"/>
<dbReference type="PDBsum" id="8XT0"/>
<dbReference type="PDBsum" id="8XT1"/>
<dbReference type="PDBsum" id="8XT2"/>
<dbReference type="PDBsum" id="8XT3"/>
<dbReference type="EMDB" id="EMD-0514"/>
<dbReference type="EMDB" id="EMD-0515"/>
<dbReference type="EMDB" id="EMD-11278"/>
<dbReference type="EMDB" id="EMD-11279"/>
<dbReference type="EMDB" id="EMD-11390"/>
<dbReference type="EMDB" id="EMD-11391"/>
<dbReference type="EMDB" id="EMD-11392"/>
<dbReference type="EMDB" id="EMD-11393"/>
<dbReference type="EMDB" id="EMD-11394"/>
<dbReference type="EMDB" id="EMD-11395"/>
<dbReference type="EMDB" id="EMD-11397"/>
<dbReference type="EMDB" id="EMD-11641"/>
<dbReference type="EMDB" id="EMD-11642"/>
<dbReference type="EMDB" id="EMD-11643"/>
<dbReference type="EMDB" id="EMD-11644"/>
<dbReference type="EMDB" id="EMD-11645"/>
<dbReference type="EMDB" id="EMD-11646"/>
<dbReference type="EMDB" id="EMD-12763"/>
<dbReference type="EMDB" id="EMD-12764"/>
<dbReference type="EMDB" id="EMD-12845"/>
<dbReference type="EMDB" id="EMD-12846"/>
<dbReference type="EMDB" id="EMD-12847"/>
<dbReference type="EMDB" id="EMD-12865"/>
<dbReference type="EMDB" id="EMD-12867"/>
<dbReference type="EMDB" id="EMD-12868"/>
<dbReference type="EMDB" id="EMD-12869"/>
<dbReference type="EMDB" id="EMD-12870"/>
<dbReference type="EMDB" id="EMD-12871"/>
<dbReference type="EMDB" id="EMD-12872"/>
<dbReference type="EMDB" id="EMD-12877"/>
<dbReference type="EMDB" id="EMD-12919"/>
<dbReference type="EMDB" id="EMD-12920"/>
<dbReference type="EMDB" id="EMD-12921"/>
<dbReference type="EMDB" id="EMD-12922"/>
<dbReference type="EMDB" id="EMD-12923"/>
<dbReference type="EMDB" id="EMD-12924"/>
<dbReference type="EMDB" id="EMD-12925"/>
<dbReference type="EMDB" id="EMD-12926"/>
<dbReference type="EMDB" id="EMD-12927"/>
<dbReference type="EMDB" id="EMD-13329"/>
<dbReference type="EMDB" id="EMD-13562"/>
<dbReference type="EMDB" id="EMD-13965"/>
<dbReference type="EMDB" id="EMD-13967"/>
<dbReference type="EMDB" id="EMD-13980"/>
<dbReference type="EMDB" id="EMD-13981"/>
<dbReference type="EMDB" id="EMD-13982"/>
<dbReference type="EMDB" id="EMD-15544"/>
<dbReference type="EMDB" id="EMD-16897"/>
<dbReference type="EMDB" id="EMD-16899"/>
<dbReference type="EMDB" id="EMD-17719"/>
<dbReference type="EMDB" id="EMD-19460"/>
<dbReference type="EMDB" id="EMD-21233"/>
<dbReference type="EMDB" id="EMD-21242"/>
<dbReference type="EMDB" id="EMD-23096"/>
<dbReference type="EMDB" id="EMD-23121"/>
<dbReference type="EMDB" id="EMD-36836"/>
<dbReference type="EMDB" id="EMD-36837"/>
<dbReference type="EMDB" id="EMD-3842"/>
<dbReference type="EMDB" id="EMD-3843"/>
<dbReference type="EMDB" id="EMD-38632"/>
<dbReference type="EMDB" id="EMD-38633"/>
<dbReference type="EMDB" id="EMD-38634"/>
<dbReference type="EMDB" id="EMD-38635"/>
<dbReference type="EMDB" id="EMD-4434"/>
<dbReference type="SMR" id="Q9NVS2"/>
<dbReference type="BioGRID" id="120468">
    <property type="interactions" value="154"/>
</dbReference>
<dbReference type="ComplexPortal" id="CPX-5226">
    <property type="entry name" value="39S mitochondrial large ribosomal subunit"/>
</dbReference>
<dbReference type="CORUM" id="Q9NVS2"/>
<dbReference type="FunCoup" id="Q9NVS2">
    <property type="interactions" value="938"/>
</dbReference>
<dbReference type="IntAct" id="Q9NVS2">
    <property type="interactions" value="87"/>
</dbReference>
<dbReference type="MINT" id="Q9NVS2"/>
<dbReference type="STRING" id="9606.ENSP00000361206"/>
<dbReference type="GlyGen" id="Q9NVS2">
    <property type="glycosylation" value="1 site, 1 O-linked glycan (1 site)"/>
</dbReference>
<dbReference type="PhosphoSitePlus" id="Q9NVS2"/>
<dbReference type="SwissPalm" id="Q9NVS2"/>
<dbReference type="BioMuta" id="MRPS18A"/>
<dbReference type="DMDM" id="24212201"/>
<dbReference type="jPOST" id="Q9NVS2"/>
<dbReference type="MassIVE" id="Q9NVS2"/>
<dbReference type="PaxDb" id="9606-ENSP00000361206"/>
<dbReference type="PeptideAtlas" id="Q9NVS2"/>
<dbReference type="ProteomicsDB" id="82852">
    <molecule id="Q9NVS2-1"/>
</dbReference>
<dbReference type="ProteomicsDB" id="82853">
    <molecule id="Q9NVS2-2"/>
</dbReference>
<dbReference type="ProteomicsDB" id="82854">
    <molecule id="Q9NVS2-3"/>
</dbReference>
<dbReference type="Pumba" id="Q9NVS2"/>
<dbReference type="TopDownProteomics" id="Q9NVS2-1">
    <molecule id="Q9NVS2-1"/>
</dbReference>
<dbReference type="TopDownProteomics" id="Q9NVS2-2">
    <molecule id="Q9NVS2-2"/>
</dbReference>
<dbReference type="Antibodypedia" id="30568">
    <property type="antibodies" value="92 antibodies from 22 providers"/>
</dbReference>
<dbReference type="DNASU" id="55168"/>
<dbReference type="Ensembl" id="ENST00000372116.5">
    <molecule id="Q9NVS2-3"/>
    <property type="protein sequence ID" value="ENSP00000361188.1"/>
    <property type="gene ID" value="ENSG00000096080.12"/>
</dbReference>
<dbReference type="Ensembl" id="ENST00000372133.8">
    <molecule id="Q9NVS2-1"/>
    <property type="protein sequence ID" value="ENSP00000361206.3"/>
    <property type="gene ID" value="ENSG00000096080.12"/>
</dbReference>
<dbReference type="GeneID" id="55168"/>
<dbReference type="KEGG" id="hsa:55168"/>
<dbReference type="MANE-Select" id="ENST00000372133.8">
    <property type="protein sequence ID" value="ENSP00000361206.3"/>
    <property type="RefSeq nucleotide sequence ID" value="NM_018135.4"/>
    <property type="RefSeq protein sequence ID" value="NP_060605.1"/>
</dbReference>
<dbReference type="UCSC" id="uc003ovy.3">
    <molecule id="Q9NVS2-1"/>
    <property type="organism name" value="human"/>
</dbReference>
<dbReference type="AGR" id="HGNC:14515"/>
<dbReference type="CTD" id="55168"/>
<dbReference type="DisGeNET" id="55168"/>
<dbReference type="GeneCards" id="MRPS18A"/>
<dbReference type="HGNC" id="HGNC:14515">
    <property type="gene designation" value="MRPS18A"/>
</dbReference>
<dbReference type="HPA" id="ENSG00000096080">
    <property type="expression patterns" value="Low tissue specificity"/>
</dbReference>
<dbReference type="MIM" id="611981">
    <property type="type" value="gene"/>
</dbReference>
<dbReference type="neXtProt" id="NX_Q9NVS2"/>
<dbReference type="OpenTargets" id="ENSG00000096080"/>
<dbReference type="PharmGKB" id="PA31003"/>
<dbReference type="VEuPathDB" id="HostDB:ENSG00000096080"/>
<dbReference type="eggNOG" id="KOG3162">
    <property type="taxonomic scope" value="Eukaryota"/>
</dbReference>
<dbReference type="GeneTree" id="ENSGT00390000006493"/>
<dbReference type="HOGENOM" id="CLU_107628_0_0_1"/>
<dbReference type="InParanoid" id="Q9NVS2"/>
<dbReference type="OMA" id="LPDHRPK"/>
<dbReference type="OrthoDB" id="10054543at2759"/>
<dbReference type="PAN-GO" id="Q9NVS2">
    <property type="GO annotations" value="3 GO annotations based on evolutionary models"/>
</dbReference>
<dbReference type="PhylomeDB" id="Q9NVS2"/>
<dbReference type="TreeFam" id="TF315738"/>
<dbReference type="PathwayCommons" id="Q9NVS2"/>
<dbReference type="Reactome" id="R-HSA-5368286">
    <property type="pathway name" value="Mitochondrial translation initiation"/>
</dbReference>
<dbReference type="Reactome" id="R-HSA-5389840">
    <property type="pathway name" value="Mitochondrial translation elongation"/>
</dbReference>
<dbReference type="Reactome" id="R-HSA-5419276">
    <property type="pathway name" value="Mitochondrial translation termination"/>
</dbReference>
<dbReference type="SignaLink" id="Q9NVS2"/>
<dbReference type="SIGNOR" id="Q9NVS2"/>
<dbReference type="BioGRID-ORCS" id="55168">
    <property type="hits" value="403 hits in 1169 CRISPR screens"/>
</dbReference>
<dbReference type="EvolutionaryTrace" id="Q9NVS2"/>
<dbReference type="GeneWiki" id="MRPS18A"/>
<dbReference type="GenomeRNAi" id="55168"/>
<dbReference type="Pharos" id="Q9NVS2">
    <property type="development level" value="Tdark"/>
</dbReference>
<dbReference type="PRO" id="PR:Q9NVS2"/>
<dbReference type="Proteomes" id="UP000005640">
    <property type="component" value="Chromosome 6"/>
</dbReference>
<dbReference type="RNAct" id="Q9NVS2">
    <property type="molecule type" value="protein"/>
</dbReference>
<dbReference type="Bgee" id="ENSG00000096080">
    <property type="expression patterns" value="Expressed in gastrocnemius and 207 other cell types or tissues"/>
</dbReference>
<dbReference type="ExpressionAtlas" id="Q9NVS2">
    <property type="expression patterns" value="baseline and differential"/>
</dbReference>
<dbReference type="GO" id="GO:0005743">
    <property type="term" value="C:mitochondrial inner membrane"/>
    <property type="evidence" value="ECO:0000304"/>
    <property type="project" value="Reactome"/>
</dbReference>
<dbReference type="GO" id="GO:0005762">
    <property type="term" value="C:mitochondrial large ribosomal subunit"/>
    <property type="evidence" value="ECO:0000314"/>
    <property type="project" value="UniProtKB"/>
</dbReference>
<dbReference type="GO" id="GO:0005763">
    <property type="term" value="C:mitochondrial small ribosomal subunit"/>
    <property type="evidence" value="ECO:0000314"/>
    <property type="project" value="UniProtKB"/>
</dbReference>
<dbReference type="GO" id="GO:0005739">
    <property type="term" value="C:mitochondrion"/>
    <property type="evidence" value="ECO:0000314"/>
    <property type="project" value="UniProtKB"/>
</dbReference>
<dbReference type="GO" id="GO:0070181">
    <property type="term" value="F:small ribosomal subunit rRNA binding"/>
    <property type="evidence" value="ECO:0000318"/>
    <property type="project" value="GO_Central"/>
</dbReference>
<dbReference type="GO" id="GO:0003735">
    <property type="term" value="F:structural constituent of ribosome"/>
    <property type="evidence" value="ECO:0000250"/>
    <property type="project" value="UniProtKB"/>
</dbReference>
<dbReference type="GO" id="GO:0032543">
    <property type="term" value="P:mitochondrial translation"/>
    <property type="evidence" value="ECO:0000250"/>
    <property type="project" value="UniProtKB"/>
</dbReference>
<dbReference type="GO" id="GO:0006412">
    <property type="term" value="P:translation"/>
    <property type="evidence" value="ECO:0000318"/>
    <property type="project" value="GO_Central"/>
</dbReference>
<dbReference type="FunFam" id="4.10.640.10:FF:000011">
    <property type="entry name" value="28S ribosomal protein S18a, mitochondrial"/>
    <property type="match status" value="1"/>
</dbReference>
<dbReference type="Gene3D" id="4.10.640.10">
    <property type="entry name" value="Ribosomal protein S18"/>
    <property type="match status" value="1"/>
</dbReference>
<dbReference type="InterPro" id="IPR001648">
    <property type="entry name" value="Ribosomal_bS18"/>
</dbReference>
<dbReference type="InterPro" id="IPR036870">
    <property type="entry name" value="Ribosomal_bS18_sf"/>
</dbReference>
<dbReference type="PANTHER" id="PTHR13479">
    <property type="entry name" value="30S RIBOSOMAL PROTEIN S18"/>
    <property type="match status" value="1"/>
</dbReference>
<dbReference type="PANTHER" id="PTHR13479:SF66">
    <property type="entry name" value="LARGE RIBOSOMAL SUBUNIT PROTEIN ML66"/>
    <property type="match status" value="1"/>
</dbReference>
<dbReference type="Pfam" id="PF01084">
    <property type="entry name" value="Ribosomal_S18"/>
    <property type="match status" value="1"/>
</dbReference>
<dbReference type="SUPFAM" id="SSF46911">
    <property type="entry name" value="Ribosomal protein S18"/>
    <property type="match status" value="1"/>
</dbReference>
<accession>Q9NVS2</accession>
<accession>A6XND3</accession>
<accession>Q5QPA4</accession>
<protein>
    <recommendedName>
        <fullName evidence="8">Large ribosomal subunit protein mL66</fullName>
    </recommendedName>
    <alternativeName>
        <fullName>39S ribosomal protein S18-3, mitochondrial</fullName>
        <shortName>MRP-S18-3</shortName>
    </alternativeName>
    <alternativeName>
        <fullName>39S ribosomal protein S18a, mitochondrial</fullName>
        <shortName>MRP-S18-a</shortName>
        <shortName>Mrps18a</shortName>
        <shortName>S18mt-a</shortName>
    </alternativeName>
    <alternativeName>
        <fullName evidence="7">Large ribosomal subunit protein bS18a</fullName>
    </alternativeName>
</protein>
<reference evidence="13" key="1">
    <citation type="journal article" date="2001" name="J. Biol. Chem.">
        <title>Proteomic analysis of the mammalian mitochondrial ribosome. Identification of protein components in the 28S small subunit.</title>
        <authorList>
            <person name="Suzuki T."/>
            <person name="Terasaki M."/>
            <person name="Takemoto-Hori C."/>
            <person name="Hanada T."/>
            <person name="Ueda T."/>
            <person name="Wada A."/>
            <person name="Watanabe K."/>
        </authorList>
    </citation>
    <scope>NUCLEOTIDE SEQUENCE [MRNA] (ISOFORM 1)</scope>
</reference>
<reference evidence="12" key="2">
    <citation type="submission" date="2006-07" db="EMBL/GenBank/DDBJ databases">
        <title>A computer system platform used to predict novel genes.</title>
        <authorList>
            <person name="Yu Z."/>
            <person name="Zheng Z."/>
            <person name="Tang T."/>
            <person name="Fu Y."/>
        </authorList>
    </citation>
    <scope>NUCLEOTIDE SEQUENCE [MRNA] (ISOFORM 2)</scope>
</reference>
<reference key="3">
    <citation type="journal article" date="2004" name="Nat. Genet.">
        <title>Complete sequencing and characterization of 21,243 full-length human cDNAs.</title>
        <authorList>
            <person name="Ota T."/>
            <person name="Suzuki Y."/>
            <person name="Nishikawa T."/>
            <person name="Otsuki T."/>
            <person name="Sugiyama T."/>
            <person name="Irie R."/>
            <person name="Wakamatsu A."/>
            <person name="Hayashi K."/>
            <person name="Sato H."/>
            <person name="Nagai K."/>
            <person name="Kimura K."/>
            <person name="Makita H."/>
            <person name="Sekine M."/>
            <person name="Obayashi M."/>
            <person name="Nishi T."/>
            <person name="Shibahara T."/>
            <person name="Tanaka T."/>
            <person name="Ishii S."/>
            <person name="Yamamoto J."/>
            <person name="Saito K."/>
            <person name="Kawai Y."/>
            <person name="Isono Y."/>
            <person name="Nakamura Y."/>
            <person name="Nagahari K."/>
            <person name="Murakami K."/>
            <person name="Yasuda T."/>
            <person name="Iwayanagi T."/>
            <person name="Wagatsuma M."/>
            <person name="Shiratori A."/>
            <person name="Sudo H."/>
            <person name="Hosoiri T."/>
            <person name="Kaku Y."/>
            <person name="Kodaira H."/>
            <person name="Kondo H."/>
            <person name="Sugawara M."/>
            <person name="Takahashi M."/>
            <person name="Kanda K."/>
            <person name="Yokoi T."/>
            <person name="Furuya T."/>
            <person name="Kikkawa E."/>
            <person name="Omura Y."/>
            <person name="Abe K."/>
            <person name="Kamihara K."/>
            <person name="Katsuta N."/>
            <person name="Sato K."/>
            <person name="Tanikawa M."/>
            <person name="Yamazaki M."/>
            <person name="Ninomiya K."/>
            <person name="Ishibashi T."/>
            <person name="Yamashita H."/>
            <person name="Murakawa K."/>
            <person name="Fujimori K."/>
            <person name="Tanai H."/>
            <person name="Kimata M."/>
            <person name="Watanabe M."/>
            <person name="Hiraoka S."/>
            <person name="Chiba Y."/>
            <person name="Ishida S."/>
            <person name="Ono Y."/>
            <person name="Takiguchi S."/>
            <person name="Watanabe S."/>
            <person name="Yosida M."/>
            <person name="Hotuta T."/>
            <person name="Kusano J."/>
            <person name="Kanehori K."/>
            <person name="Takahashi-Fujii A."/>
            <person name="Hara H."/>
            <person name="Tanase T.-O."/>
            <person name="Nomura Y."/>
            <person name="Togiya S."/>
            <person name="Komai F."/>
            <person name="Hara R."/>
            <person name="Takeuchi K."/>
            <person name="Arita M."/>
            <person name="Imose N."/>
            <person name="Musashino K."/>
            <person name="Yuuki H."/>
            <person name="Oshima A."/>
            <person name="Sasaki N."/>
            <person name="Aotsuka S."/>
            <person name="Yoshikawa Y."/>
            <person name="Matsunawa H."/>
            <person name="Ichihara T."/>
            <person name="Shiohata N."/>
            <person name="Sano S."/>
            <person name="Moriya S."/>
            <person name="Momiyama H."/>
            <person name="Satoh N."/>
            <person name="Takami S."/>
            <person name="Terashima Y."/>
            <person name="Suzuki O."/>
            <person name="Nakagawa S."/>
            <person name="Senoh A."/>
            <person name="Mizoguchi H."/>
            <person name="Goto Y."/>
            <person name="Shimizu F."/>
            <person name="Wakebe H."/>
            <person name="Hishigaki H."/>
            <person name="Watanabe T."/>
            <person name="Sugiyama A."/>
            <person name="Takemoto M."/>
            <person name="Kawakami B."/>
            <person name="Yamazaki M."/>
            <person name="Watanabe K."/>
            <person name="Kumagai A."/>
            <person name="Itakura S."/>
            <person name="Fukuzumi Y."/>
            <person name="Fujimori Y."/>
            <person name="Komiyama M."/>
            <person name="Tashiro H."/>
            <person name="Tanigami A."/>
            <person name="Fujiwara T."/>
            <person name="Ono T."/>
            <person name="Yamada K."/>
            <person name="Fujii Y."/>
            <person name="Ozaki K."/>
            <person name="Hirao M."/>
            <person name="Ohmori Y."/>
            <person name="Kawabata A."/>
            <person name="Hikiji T."/>
            <person name="Kobatake N."/>
            <person name="Inagaki H."/>
            <person name="Ikema Y."/>
            <person name="Okamoto S."/>
            <person name="Okitani R."/>
            <person name="Kawakami T."/>
            <person name="Noguchi S."/>
            <person name="Itoh T."/>
            <person name="Shigeta K."/>
            <person name="Senba T."/>
            <person name="Matsumura K."/>
            <person name="Nakajima Y."/>
            <person name="Mizuno T."/>
            <person name="Morinaga M."/>
            <person name="Sasaki M."/>
            <person name="Togashi T."/>
            <person name="Oyama M."/>
            <person name="Hata H."/>
            <person name="Watanabe M."/>
            <person name="Komatsu T."/>
            <person name="Mizushima-Sugano J."/>
            <person name="Satoh T."/>
            <person name="Shirai Y."/>
            <person name="Takahashi Y."/>
            <person name="Nakagawa K."/>
            <person name="Okumura K."/>
            <person name="Nagase T."/>
            <person name="Nomura N."/>
            <person name="Kikuchi H."/>
            <person name="Masuho Y."/>
            <person name="Yamashita R."/>
            <person name="Nakai K."/>
            <person name="Yada T."/>
            <person name="Nakamura Y."/>
            <person name="Ohara O."/>
            <person name="Isogai T."/>
            <person name="Sugano S."/>
        </authorList>
    </citation>
    <scope>NUCLEOTIDE SEQUENCE [LARGE SCALE MRNA] (ISOFORMS 1 AND 3)</scope>
</reference>
<reference key="4">
    <citation type="journal article" date="2003" name="Nature">
        <title>The DNA sequence and analysis of human chromosome 6.</title>
        <authorList>
            <person name="Mungall A.J."/>
            <person name="Palmer S.A."/>
            <person name="Sims S.K."/>
            <person name="Edwards C.A."/>
            <person name="Ashurst J.L."/>
            <person name="Wilming L."/>
            <person name="Jones M.C."/>
            <person name="Horton R."/>
            <person name="Hunt S.E."/>
            <person name="Scott C.E."/>
            <person name="Gilbert J.G.R."/>
            <person name="Clamp M.E."/>
            <person name="Bethel G."/>
            <person name="Milne S."/>
            <person name="Ainscough R."/>
            <person name="Almeida J.P."/>
            <person name="Ambrose K.D."/>
            <person name="Andrews T.D."/>
            <person name="Ashwell R.I.S."/>
            <person name="Babbage A.K."/>
            <person name="Bagguley C.L."/>
            <person name="Bailey J."/>
            <person name="Banerjee R."/>
            <person name="Barker D.J."/>
            <person name="Barlow K.F."/>
            <person name="Bates K."/>
            <person name="Beare D.M."/>
            <person name="Beasley H."/>
            <person name="Beasley O."/>
            <person name="Bird C.P."/>
            <person name="Blakey S.E."/>
            <person name="Bray-Allen S."/>
            <person name="Brook J."/>
            <person name="Brown A.J."/>
            <person name="Brown J.Y."/>
            <person name="Burford D.C."/>
            <person name="Burrill W."/>
            <person name="Burton J."/>
            <person name="Carder C."/>
            <person name="Carter N.P."/>
            <person name="Chapman J.C."/>
            <person name="Clark S.Y."/>
            <person name="Clark G."/>
            <person name="Clee C.M."/>
            <person name="Clegg S."/>
            <person name="Cobley V."/>
            <person name="Collier R.E."/>
            <person name="Collins J.E."/>
            <person name="Colman L.K."/>
            <person name="Corby N.R."/>
            <person name="Coville G.J."/>
            <person name="Culley K.M."/>
            <person name="Dhami P."/>
            <person name="Davies J."/>
            <person name="Dunn M."/>
            <person name="Earthrowl M.E."/>
            <person name="Ellington A.E."/>
            <person name="Evans K.A."/>
            <person name="Faulkner L."/>
            <person name="Francis M.D."/>
            <person name="Frankish A."/>
            <person name="Frankland J."/>
            <person name="French L."/>
            <person name="Garner P."/>
            <person name="Garnett J."/>
            <person name="Ghori M.J."/>
            <person name="Gilby L.M."/>
            <person name="Gillson C.J."/>
            <person name="Glithero R.J."/>
            <person name="Grafham D.V."/>
            <person name="Grant M."/>
            <person name="Gribble S."/>
            <person name="Griffiths C."/>
            <person name="Griffiths M.N.D."/>
            <person name="Hall R."/>
            <person name="Halls K.S."/>
            <person name="Hammond S."/>
            <person name="Harley J.L."/>
            <person name="Hart E.A."/>
            <person name="Heath P.D."/>
            <person name="Heathcott R."/>
            <person name="Holmes S.J."/>
            <person name="Howden P.J."/>
            <person name="Howe K.L."/>
            <person name="Howell G.R."/>
            <person name="Huckle E."/>
            <person name="Humphray S.J."/>
            <person name="Humphries M.D."/>
            <person name="Hunt A.R."/>
            <person name="Johnson C.M."/>
            <person name="Joy A.A."/>
            <person name="Kay M."/>
            <person name="Keenan S.J."/>
            <person name="Kimberley A.M."/>
            <person name="King A."/>
            <person name="Laird G.K."/>
            <person name="Langford C."/>
            <person name="Lawlor S."/>
            <person name="Leongamornlert D.A."/>
            <person name="Leversha M."/>
            <person name="Lloyd C.R."/>
            <person name="Lloyd D.M."/>
            <person name="Loveland J.E."/>
            <person name="Lovell J."/>
            <person name="Martin S."/>
            <person name="Mashreghi-Mohammadi M."/>
            <person name="Maslen G.L."/>
            <person name="Matthews L."/>
            <person name="McCann O.T."/>
            <person name="McLaren S.J."/>
            <person name="McLay K."/>
            <person name="McMurray A."/>
            <person name="Moore M.J.F."/>
            <person name="Mullikin J.C."/>
            <person name="Niblett D."/>
            <person name="Nickerson T."/>
            <person name="Novik K.L."/>
            <person name="Oliver K."/>
            <person name="Overton-Larty E.K."/>
            <person name="Parker A."/>
            <person name="Patel R."/>
            <person name="Pearce A.V."/>
            <person name="Peck A.I."/>
            <person name="Phillimore B.J.C.T."/>
            <person name="Phillips S."/>
            <person name="Plumb R.W."/>
            <person name="Porter K.M."/>
            <person name="Ramsey Y."/>
            <person name="Ranby S.A."/>
            <person name="Rice C.M."/>
            <person name="Ross M.T."/>
            <person name="Searle S.M."/>
            <person name="Sehra H.K."/>
            <person name="Sheridan E."/>
            <person name="Skuce C.D."/>
            <person name="Smith S."/>
            <person name="Smith M."/>
            <person name="Spraggon L."/>
            <person name="Squares S.L."/>
            <person name="Steward C.A."/>
            <person name="Sycamore N."/>
            <person name="Tamlyn-Hall G."/>
            <person name="Tester J."/>
            <person name="Theaker A.J."/>
            <person name="Thomas D.W."/>
            <person name="Thorpe A."/>
            <person name="Tracey A."/>
            <person name="Tromans A."/>
            <person name="Tubby B."/>
            <person name="Wall M."/>
            <person name="Wallis J.M."/>
            <person name="West A.P."/>
            <person name="White S.S."/>
            <person name="Whitehead S.L."/>
            <person name="Whittaker H."/>
            <person name="Wild A."/>
            <person name="Willey D.J."/>
            <person name="Wilmer T.E."/>
            <person name="Wood J.M."/>
            <person name="Wray P.W."/>
            <person name="Wyatt J.C."/>
            <person name="Young L."/>
            <person name="Younger R.M."/>
            <person name="Bentley D.R."/>
            <person name="Coulson A."/>
            <person name="Durbin R.M."/>
            <person name="Hubbard T."/>
            <person name="Sulston J.E."/>
            <person name="Dunham I."/>
            <person name="Rogers J."/>
            <person name="Beck S."/>
        </authorList>
    </citation>
    <scope>NUCLEOTIDE SEQUENCE [LARGE SCALE GENOMIC DNA]</scope>
</reference>
<reference evidence="12" key="5">
    <citation type="submission" date="2005-07" db="EMBL/GenBank/DDBJ databases">
        <authorList>
            <person name="Mural R.J."/>
            <person name="Istrail S."/>
            <person name="Sutton G."/>
            <person name="Florea L."/>
            <person name="Halpern A.L."/>
            <person name="Mobarry C.M."/>
            <person name="Lippert R."/>
            <person name="Walenz B."/>
            <person name="Shatkay H."/>
            <person name="Dew I."/>
            <person name="Miller J.R."/>
            <person name="Flanigan M.J."/>
            <person name="Edwards N.J."/>
            <person name="Bolanos R."/>
            <person name="Fasulo D."/>
            <person name="Halldorsson B.V."/>
            <person name="Hannenhalli S."/>
            <person name="Turner R."/>
            <person name="Yooseph S."/>
            <person name="Lu F."/>
            <person name="Nusskern D.R."/>
            <person name="Shue B.C."/>
            <person name="Zheng X.H."/>
            <person name="Zhong F."/>
            <person name="Delcher A.L."/>
            <person name="Huson D.H."/>
            <person name="Kravitz S.A."/>
            <person name="Mouchard L."/>
            <person name="Reinert K."/>
            <person name="Remington K.A."/>
            <person name="Clark A.G."/>
            <person name="Waterman M.S."/>
            <person name="Eichler E.E."/>
            <person name="Adams M.D."/>
            <person name="Hunkapiller M.W."/>
            <person name="Myers E.W."/>
            <person name="Venter J.C."/>
        </authorList>
    </citation>
    <scope>NUCLEOTIDE SEQUENCE [LARGE SCALE GENOMIC DNA]</scope>
</reference>
<reference key="6">
    <citation type="journal article" date="2004" name="Genome Res.">
        <title>The status, quality, and expansion of the NIH full-length cDNA project: the Mammalian Gene Collection (MGC).</title>
        <authorList>
            <consortium name="The MGC Project Team"/>
        </authorList>
    </citation>
    <scope>NUCLEOTIDE SEQUENCE [LARGE SCALE MRNA] (ISOFORM 1)</scope>
    <source>
        <tissue>Prostate</tissue>
    </source>
</reference>
<reference evidence="10" key="7">
    <citation type="journal article" date="2001" name="J. Biol. Chem.">
        <title>The small subunit of the mammalian mitochondrial ribosome: identification of the full complement of ribosomal proteins present.</title>
        <authorList>
            <person name="Koc E.C."/>
            <person name="Burkhart W."/>
            <person name="Blackburn K."/>
            <person name="Moseley A."/>
            <person name="Spremulli L.L."/>
        </authorList>
    </citation>
    <scope>IDENTIFICATION</scope>
</reference>
<reference key="8">
    <citation type="journal article" date="2011" name="BMC Syst. Biol.">
        <title>Initial characterization of the human central proteome.</title>
        <authorList>
            <person name="Burkard T.R."/>
            <person name="Planyavsky M."/>
            <person name="Kaupe I."/>
            <person name="Breitwieser F.P."/>
            <person name="Buerckstuemmer T."/>
            <person name="Bennett K.L."/>
            <person name="Superti-Furga G."/>
            <person name="Colinge J."/>
        </authorList>
    </citation>
    <scope>IDENTIFICATION BY MASS SPECTROMETRY [LARGE SCALE ANALYSIS]</scope>
</reference>
<reference key="9">
    <citation type="journal article" date="2015" name="Proteomics">
        <title>N-terminome analysis of the human mitochondrial proteome.</title>
        <authorList>
            <person name="Vaca Jacome A.S."/>
            <person name="Rabilloud T."/>
            <person name="Schaeffer-Reiss C."/>
            <person name="Rompais M."/>
            <person name="Ayoub D."/>
            <person name="Lane L."/>
            <person name="Bairoch A."/>
            <person name="Van Dorsselaer A."/>
            <person name="Carapito C."/>
        </authorList>
    </citation>
    <scope>IDENTIFICATION BY MASS SPECTROMETRY [LARGE SCALE ANALYSIS]</scope>
</reference>
<reference key="10">
    <citation type="journal article" date="2016" name="Annu. Rev. Biochem.">
        <title>Structure and function of the mitochondrial ribosome.</title>
        <authorList>
            <person name="Greber B.J."/>
            <person name="Ban N."/>
        </authorList>
    </citation>
    <scope>NOMENCLATURE</scope>
</reference>
<reference evidence="14" key="11">
    <citation type="journal article" date="2014" name="Science">
        <title>Structure of the large ribosomal subunit from human mitochondria.</title>
        <authorList>
            <person name="Brown A."/>
            <person name="Amunts A."/>
            <person name="Bai X.C."/>
            <person name="Sugimoto Y."/>
            <person name="Edwards P.C."/>
            <person name="Murshudov G."/>
            <person name="Scheres S.H."/>
            <person name="Ramakrishnan V."/>
        </authorList>
    </citation>
    <scope>STRUCTURE BY ELECTRON MICROSCOPY (3.40 ANGSTROMS)</scope>
    <scope>SUBCELLULAR LOCATION</scope>
    <scope>SUBUNIT</scope>
</reference>
<reference evidence="15" key="12">
    <citation type="journal article" date="2015" name="Science">
        <title>Ribosome. The structure of the human mitochondrial ribosome.</title>
        <authorList>
            <person name="Amunts A."/>
            <person name="Brown A."/>
            <person name="Toots J."/>
            <person name="Scheres S.H."/>
            <person name="Ramakrishnan V."/>
        </authorList>
    </citation>
    <scope>STRUCTURE BY ELECTRON MICROSCOPY (3.50 ANGSTROMS)</scope>
    <scope>SUBCELLULAR LOCATION</scope>
    <scope>SUBUNIT</scope>
</reference>
<reference evidence="16 17" key="13">
    <citation type="journal article" date="2017" name="Nat. Struct. Mol. Biol.">
        <title>Structures of the human mitochondrial ribosome in native states of assembly.</title>
        <authorList>
            <person name="Brown A."/>
            <person name="Rathore S."/>
            <person name="Kimanius D."/>
            <person name="Aibara S."/>
            <person name="Bai X.C."/>
            <person name="Rorbach J."/>
            <person name="Amunts A."/>
            <person name="Ramakrishnan V."/>
        </authorList>
    </citation>
    <scope>STRUCTURE BY ELECTRON MICROSCOPY (3.03 ANGSTROMS)</scope>
    <scope>SUBCELLULAR LOCATION</scope>
    <scope>SUBUNIT</scope>
</reference>
<reference evidence="18 19" key="14">
    <citation type="journal article" date="2022" name="Nat. Commun.">
        <title>A late-stage assembly checkpoint of the human mitochondrial ribosome large subunit.</title>
        <authorList>
            <person name="Rebelo-Guiomar P."/>
            <person name="Pellegrino S."/>
            <person name="Dent K.C."/>
            <person name="Sas-Chen A."/>
            <person name="Miller-Fleming L."/>
            <person name="Garone C."/>
            <person name="Van Haute L."/>
            <person name="Rogan J.F."/>
            <person name="Dinan A."/>
            <person name="Firth A.E."/>
            <person name="Andrews B."/>
            <person name="Whitworth A.J."/>
            <person name="Schwartz S."/>
            <person name="Warren A.J."/>
            <person name="Minczuk M."/>
        </authorList>
    </citation>
    <scope>STRUCTURE BY ELECTRON MICROSCOPY (2.9 ANGSTROMS) IN COMPLEX WITH MTLSU</scope>
    <scope>SUBUNIT</scope>
</reference>
<feature type="transit peptide" description="Mitochondrion" evidence="1">
    <location>
        <begin position="1"/>
        <end position="34"/>
    </location>
</feature>
<feature type="chain" id="PRO_0000030625" description="Large ribosomal subunit protein mL66">
    <location>
        <begin position="35"/>
        <end position="196"/>
    </location>
</feature>
<feature type="splice variant" id="VSP_041245" description="In isoform 2." evidence="9">
    <original>A</original>
    <variation>AGRRPWGPRGAEGCRHSLPTQLPHVSAPPGRKVDIRSVNYTHHPMPTFPLPWAFPLAPSELQRELQRLSPLPRHS</variation>
    <location>
        <position position="125"/>
    </location>
</feature>
<feature type="splice variant" id="VSP_043496" description="In isoform 3." evidence="6">
    <original>LLPNHRPRLPEGVVPKSKPQLNRYLTRWAPGSVKPIYKKGPRWNRVRMPVGSPLLRDNVCYSRTPWKLYH</original>
    <variation>T</variation>
    <location>
        <begin position="127"/>
        <end position="196"/>
    </location>
</feature>
<feature type="strand" evidence="20">
    <location>
        <begin position="36"/>
        <end position="40"/>
    </location>
</feature>
<feature type="strand" evidence="20">
    <location>
        <begin position="48"/>
        <end position="53"/>
    </location>
</feature>
<feature type="helix" evidence="20">
    <location>
        <begin position="71"/>
        <end position="74"/>
    </location>
</feature>
<feature type="strand" evidence="21">
    <location>
        <begin position="83"/>
        <end position="85"/>
    </location>
</feature>
<feature type="helix" evidence="20">
    <location>
        <begin position="86"/>
        <end position="89"/>
    </location>
</feature>
<feature type="helix" evidence="20">
    <location>
        <begin position="90"/>
        <end position="92"/>
    </location>
</feature>
<feature type="helix" evidence="20">
    <location>
        <begin position="102"/>
        <end position="105"/>
    </location>
</feature>
<feature type="helix" evidence="20">
    <location>
        <begin position="109"/>
        <end position="124"/>
    </location>
</feature>
<feature type="helix" evidence="22">
    <location>
        <begin position="129"/>
        <end position="131"/>
    </location>
</feature>
<feature type="strand" evidence="20">
    <location>
        <begin position="148"/>
        <end position="151"/>
    </location>
</feature>
<feature type="helix" evidence="20">
    <location>
        <begin position="156"/>
        <end position="158"/>
    </location>
</feature>
<feature type="helix" evidence="20">
    <location>
        <begin position="168"/>
        <end position="170"/>
    </location>
</feature>
<feature type="helix" evidence="20">
    <location>
        <begin position="179"/>
        <end position="183"/>
    </location>
</feature>
<feature type="strand" evidence="20">
    <location>
        <begin position="188"/>
        <end position="190"/>
    </location>
</feature>
<keyword id="KW-0002">3D-structure</keyword>
<keyword id="KW-0025">Alternative splicing</keyword>
<keyword id="KW-0496">Mitochondrion</keyword>
<keyword id="KW-1267">Proteomics identification</keyword>
<keyword id="KW-1185">Reference proteome</keyword>
<keyword id="KW-0687">Ribonucleoprotein</keyword>
<keyword id="KW-0689">Ribosomal protein</keyword>
<keyword id="KW-0809">Transit peptide</keyword>